<comment type="function">
    <text evidence="2">Is required for the expression of the adjacently encoded xylanase Xyn11E in an active form. LppX seems to act as a specific chaperone necessary for the correct folding of the xylanase during secretion across the cytoplasmic membrane.</text>
</comment>
<comment type="subcellular location">
    <subcellularLocation>
        <location evidence="1">Cell membrane</location>
        <topology evidence="1">Lipid-anchor</topology>
    </subcellularLocation>
</comment>
<proteinExistence type="inferred from homology"/>
<name>LPPX_PAEBA</name>
<sequence>MRKWLIFLLIAAVAGLSACSTSGNTTVSDDLVLVEGGAFKTSKSSYSDKNVTLSDFYIGKYEVTQKQWMDVMGDNPSGFKGEERPVERVTWYDAIEYCNARSIKENLKPYYTIDKETTDPDNKNENDNIKWTVTINEGANGYRLPTGAEWEYAASGGQKSQNFTYSGSNNPDEVAWYWMNAGEKPLTGDWNWPAIENNRNQTKPVGQQKANELGIYDMSGNVREWCWEWHSHPETPENTWRISKGGGWVSSVNTAEISYPGKFDANGLGPDQGLRVVRSK</sequence>
<feature type="signal peptide" evidence="1">
    <location>
        <begin position="1"/>
        <end position="18"/>
    </location>
</feature>
<feature type="chain" id="PRO_5016557793" description="Chaperone protein LppX">
    <location>
        <begin position="19"/>
        <end position="280"/>
    </location>
</feature>
<feature type="lipid moiety-binding region" description="N-palmitoyl cysteine" evidence="1">
    <location>
        <position position="19"/>
    </location>
</feature>
<feature type="lipid moiety-binding region" description="S-diacylglycerol cysteine" evidence="1">
    <location>
        <position position="19"/>
    </location>
</feature>
<accession>V9TSX0</accession>
<reference key="1">
    <citation type="journal article" date="2014" name="Appl. Microbiol. Biotechnol.">
        <title>Xyn11E from Paenibacillus barcinonensis BP-23: a LppX-chaperone-dependent xylanase with potential for upgrading paper pulps.</title>
        <authorList>
            <person name="Valenzuela S.V."/>
            <person name="Diaz P."/>
            <person name="Pastor F.I."/>
        </authorList>
    </citation>
    <scope>NUCLEOTIDE SEQUENCE [GENOMIC DNA]</scope>
    <scope>FUNCTION</scope>
    <source>
        <strain>DSM 15478 / BCRC 17560 / CECT 7022 / CIP 108718 / BP-23</strain>
    </source>
</reference>
<reference key="2">
    <citation type="journal article" date="2015" name="Stand. Genomic Sci.">
        <title>Genomic Encyclopedia of Bacterial and Archaeal Type Strains, Phase III: the genomes of soil and plant-associated and newly described type strains.</title>
        <authorList>
            <person name="Whitman W.B."/>
            <person name="Woyke T."/>
            <person name="Klenk H.P."/>
            <person name="Zhou Y."/>
            <person name="Lilburn T.G."/>
            <person name="Beck B.J."/>
            <person name="De Vos P."/>
            <person name="Vandamme P."/>
            <person name="Eisen J.A."/>
            <person name="Garrity G."/>
            <person name="Hugenholtz P."/>
            <person name="Kyrpides N.C."/>
        </authorList>
    </citation>
    <scope>NUCLEOTIDE SEQUENCE [LARGE SCALE GENOMIC DNA]</scope>
    <source>
        <strain>DSM 15478 / BCRC 17560 / CECT 7022 / CIP 108718 / BP-23</strain>
    </source>
</reference>
<dbReference type="EMBL" id="KF766535">
    <property type="protein sequence ID" value="AHC74024.1"/>
    <property type="molecule type" value="Genomic_DNA"/>
</dbReference>
<dbReference type="EMBL" id="QJSW01000010">
    <property type="protein sequence ID" value="PYE48004.1"/>
    <property type="molecule type" value="Genomic_DNA"/>
</dbReference>
<dbReference type="RefSeq" id="WP_110897547.1">
    <property type="nucleotide sequence ID" value="NZ_CP054614.1"/>
</dbReference>
<dbReference type="SMR" id="V9TSX0"/>
<dbReference type="OrthoDB" id="9768004at2"/>
<dbReference type="Proteomes" id="UP000247790">
    <property type="component" value="Unassembled WGS sequence"/>
</dbReference>
<dbReference type="GO" id="GO:0005886">
    <property type="term" value="C:plasma membrane"/>
    <property type="evidence" value="ECO:0007669"/>
    <property type="project" value="UniProtKB-SubCell"/>
</dbReference>
<dbReference type="GO" id="GO:0120147">
    <property type="term" value="F:formylglycine-generating oxidase activity"/>
    <property type="evidence" value="ECO:0007669"/>
    <property type="project" value="TreeGrafter"/>
</dbReference>
<dbReference type="GO" id="GO:0044183">
    <property type="term" value="F:protein folding chaperone"/>
    <property type="evidence" value="ECO:0000314"/>
    <property type="project" value="UniProtKB"/>
</dbReference>
<dbReference type="GO" id="GO:0006457">
    <property type="term" value="P:protein folding"/>
    <property type="evidence" value="ECO:0000314"/>
    <property type="project" value="UniProtKB"/>
</dbReference>
<dbReference type="Gene3D" id="3.90.1580.10">
    <property type="entry name" value="paralog of FGE (formylglycine-generating enzyme)"/>
    <property type="match status" value="1"/>
</dbReference>
<dbReference type="InterPro" id="IPR016187">
    <property type="entry name" value="CTDL_fold"/>
</dbReference>
<dbReference type="InterPro" id="IPR051043">
    <property type="entry name" value="Sulfatase_Mod_Factor_Kinase"/>
</dbReference>
<dbReference type="InterPro" id="IPR005532">
    <property type="entry name" value="SUMF_dom"/>
</dbReference>
<dbReference type="InterPro" id="IPR042095">
    <property type="entry name" value="SUMF_sf"/>
</dbReference>
<dbReference type="PANTHER" id="PTHR23150:SF19">
    <property type="entry name" value="FORMYLGLYCINE-GENERATING ENZYME"/>
    <property type="match status" value="1"/>
</dbReference>
<dbReference type="PANTHER" id="PTHR23150">
    <property type="entry name" value="SULFATASE MODIFYING FACTOR 1, 2"/>
    <property type="match status" value="1"/>
</dbReference>
<dbReference type="Pfam" id="PF03781">
    <property type="entry name" value="FGE-sulfatase"/>
    <property type="match status" value="1"/>
</dbReference>
<dbReference type="SUPFAM" id="SSF56436">
    <property type="entry name" value="C-type lectin-like"/>
    <property type="match status" value="1"/>
</dbReference>
<dbReference type="PROSITE" id="PS51257">
    <property type="entry name" value="PROKAR_LIPOPROTEIN"/>
    <property type="match status" value="1"/>
</dbReference>
<organism>
    <name type="scientific">Paenibacillus barcinonensis</name>
    <dbReference type="NCBI Taxonomy" id="198119"/>
    <lineage>
        <taxon>Bacteria</taxon>
        <taxon>Bacillati</taxon>
        <taxon>Bacillota</taxon>
        <taxon>Bacilli</taxon>
        <taxon>Bacillales</taxon>
        <taxon>Paenibacillaceae</taxon>
        <taxon>Paenibacillus</taxon>
    </lineage>
</organism>
<gene>
    <name evidence="3 4" type="primary">lppX</name>
    <name evidence="5" type="ORF">DFQ00_11066</name>
</gene>
<evidence type="ECO:0000255" key="1">
    <source>
        <dbReference type="PROSITE-ProRule" id="PRU00303"/>
    </source>
</evidence>
<evidence type="ECO:0000269" key="2">
    <source>
    </source>
</evidence>
<evidence type="ECO:0000303" key="3">
    <source>
    </source>
</evidence>
<evidence type="ECO:0000312" key="4">
    <source>
        <dbReference type="EMBL" id="AHC74024.1"/>
    </source>
</evidence>
<evidence type="ECO:0000312" key="5">
    <source>
        <dbReference type="EMBL" id="PYE48004.1"/>
    </source>
</evidence>
<protein>
    <recommendedName>
        <fullName evidence="3">Chaperone protein LppX</fullName>
    </recommendedName>
</protein>
<keyword id="KW-1003">Cell membrane</keyword>
<keyword id="KW-0143">Chaperone</keyword>
<keyword id="KW-0449">Lipoprotein</keyword>
<keyword id="KW-0472">Membrane</keyword>
<keyword id="KW-0564">Palmitate</keyword>
<keyword id="KW-0732">Signal</keyword>